<accession>Q9D5U0</accession>
<organism>
    <name type="scientific">Mus musculus</name>
    <name type="common">Mouse</name>
    <dbReference type="NCBI Taxonomy" id="10090"/>
    <lineage>
        <taxon>Eukaryota</taxon>
        <taxon>Metazoa</taxon>
        <taxon>Chordata</taxon>
        <taxon>Craniata</taxon>
        <taxon>Vertebrata</taxon>
        <taxon>Euteleostomi</taxon>
        <taxon>Mammalia</taxon>
        <taxon>Eutheria</taxon>
        <taxon>Euarchontoglires</taxon>
        <taxon>Glires</taxon>
        <taxon>Rodentia</taxon>
        <taxon>Myomorpha</taxon>
        <taxon>Muroidea</taxon>
        <taxon>Muridae</taxon>
        <taxon>Murinae</taxon>
        <taxon>Mus</taxon>
        <taxon>Mus</taxon>
    </lineage>
</organism>
<proteinExistence type="evidence at transcript level"/>
<comment type="function">
    <text evidence="1">Probable acetyltransferase.</text>
</comment>
<comment type="pathway">
    <text>Lipid metabolism; phospholipid metabolism.</text>
</comment>
<comment type="subcellular location">
    <subcellularLocation>
        <location evidence="4">Membrane</location>
        <topology evidence="4">Multi-pass membrane protein</topology>
    </subcellularLocation>
</comment>
<comment type="domain">
    <text evidence="1">The HXXXXD motif is essential for acyltransferase activity.</text>
</comment>
<comment type="similarity">
    <text evidence="4">Belongs to the 1-acyl-sn-glycerol-3-phosphate acyltransferase family.</text>
</comment>
<reference key="1">
    <citation type="journal article" date="2005" name="Science">
        <title>The transcriptional landscape of the mammalian genome.</title>
        <authorList>
            <person name="Carninci P."/>
            <person name="Kasukawa T."/>
            <person name="Katayama S."/>
            <person name="Gough J."/>
            <person name="Frith M.C."/>
            <person name="Maeda N."/>
            <person name="Oyama R."/>
            <person name="Ravasi T."/>
            <person name="Lenhard B."/>
            <person name="Wells C."/>
            <person name="Kodzius R."/>
            <person name="Shimokawa K."/>
            <person name="Bajic V.B."/>
            <person name="Brenner S.E."/>
            <person name="Batalov S."/>
            <person name="Forrest A.R."/>
            <person name="Zavolan M."/>
            <person name="Davis M.J."/>
            <person name="Wilming L.G."/>
            <person name="Aidinis V."/>
            <person name="Allen J.E."/>
            <person name="Ambesi-Impiombato A."/>
            <person name="Apweiler R."/>
            <person name="Aturaliya R.N."/>
            <person name="Bailey T.L."/>
            <person name="Bansal M."/>
            <person name="Baxter L."/>
            <person name="Beisel K.W."/>
            <person name="Bersano T."/>
            <person name="Bono H."/>
            <person name="Chalk A.M."/>
            <person name="Chiu K.P."/>
            <person name="Choudhary V."/>
            <person name="Christoffels A."/>
            <person name="Clutterbuck D.R."/>
            <person name="Crowe M.L."/>
            <person name="Dalla E."/>
            <person name="Dalrymple B.P."/>
            <person name="de Bono B."/>
            <person name="Della Gatta G."/>
            <person name="di Bernardo D."/>
            <person name="Down T."/>
            <person name="Engstrom P."/>
            <person name="Fagiolini M."/>
            <person name="Faulkner G."/>
            <person name="Fletcher C.F."/>
            <person name="Fukushima T."/>
            <person name="Furuno M."/>
            <person name="Futaki S."/>
            <person name="Gariboldi M."/>
            <person name="Georgii-Hemming P."/>
            <person name="Gingeras T.R."/>
            <person name="Gojobori T."/>
            <person name="Green R.E."/>
            <person name="Gustincich S."/>
            <person name="Harbers M."/>
            <person name="Hayashi Y."/>
            <person name="Hensch T.K."/>
            <person name="Hirokawa N."/>
            <person name="Hill D."/>
            <person name="Huminiecki L."/>
            <person name="Iacono M."/>
            <person name="Ikeo K."/>
            <person name="Iwama A."/>
            <person name="Ishikawa T."/>
            <person name="Jakt M."/>
            <person name="Kanapin A."/>
            <person name="Katoh M."/>
            <person name="Kawasawa Y."/>
            <person name="Kelso J."/>
            <person name="Kitamura H."/>
            <person name="Kitano H."/>
            <person name="Kollias G."/>
            <person name="Krishnan S.P."/>
            <person name="Kruger A."/>
            <person name="Kummerfeld S.K."/>
            <person name="Kurochkin I.V."/>
            <person name="Lareau L.F."/>
            <person name="Lazarevic D."/>
            <person name="Lipovich L."/>
            <person name="Liu J."/>
            <person name="Liuni S."/>
            <person name="McWilliam S."/>
            <person name="Madan Babu M."/>
            <person name="Madera M."/>
            <person name="Marchionni L."/>
            <person name="Matsuda H."/>
            <person name="Matsuzawa S."/>
            <person name="Miki H."/>
            <person name="Mignone F."/>
            <person name="Miyake S."/>
            <person name="Morris K."/>
            <person name="Mottagui-Tabar S."/>
            <person name="Mulder N."/>
            <person name="Nakano N."/>
            <person name="Nakauchi H."/>
            <person name="Ng P."/>
            <person name="Nilsson R."/>
            <person name="Nishiguchi S."/>
            <person name="Nishikawa S."/>
            <person name="Nori F."/>
            <person name="Ohara O."/>
            <person name="Okazaki Y."/>
            <person name="Orlando V."/>
            <person name="Pang K.C."/>
            <person name="Pavan W.J."/>
            <person name="Pavesi G."/>
            <person name="Pesole G."/>
            <person name="Petrovsky N."/>
            <person name="Piazza S."/>
            <person name="Reed J."/>
            <person name="Reid J.F."/>
            <person name="Ring B.Z."/>
            <person name="Ringwald M."/>
            <person name="Rost B."/>
            <person name="Ruan Y."/>
            <person name="Salzberg S.L."/>
            <person name="Sandelin A."/>
            <person name="Schneider C."/>
            <person name="Schoenbach C."/>
            <person name="Sekiguchi K."/>
            <person name="Semple C.A."/>
            <person name="Seno S."/>
            <person name="Sessa L."/>
            <person name="Sheng Y."/>
            <person name="Shibata Y."/>
            <person name="Shimada H."/>
            <person name="Shimada K."/>
            <person name="Silva D."/>
            <person name="Sinclair B."/>
            <person name="Sperling S."/>
            <person name="Stupka E."/>
            <person name="Sugiura K."/>
            <person name="Sultana R."/>
            <person name="Takenaka Y."/>
            <person name="Taki K."/>
            <person name="Tammoja K."/>
            <person name="Tan S.L."/>
            <person name="Tang S."/>
            <person name="Taylor M.S."/>
            <person name="Tegner J."/>
            <person name="Teichmann S.A."/>
            <person name="Ueda H.R."/>
            <person name="van Nimwegen E."/>
            <person name="Verardo R."/>
            <person name="Wei C.L."/>
            <person name="Yagi K."/>
            <person name="Yamanishi H."/>
            <person name="Zabarovsky E."/>
            <person name="Zhu S."/>
            <person name="Zimmer A."/>
            <person name="Hide W."/>
            <person name="Bult C."/>
            <person name="Grimmond S.M."/>
            <person name="Teasdale R.D."/>
            <person name="Liu E.T."/>
            <person name="Brusic V."/>
            <person name="Quackenbush J."/>
            <person name="Wahlestedt C."/>
            <person name="Mattick J.S."/>
            <person name="Hume D.A."/>
            <person name="Kai C."/>
            <person name="Sasaki D."/>
            <person name="Tomaru Y."/>
            <person name="Fukuda S."/>
            <person name="Kanamori-Katayama M."/>
            <person name="Suzuki M."/>
            <person name="Aoki J."/>
            <person name="Arakawa T."/>
            <person name="Iida J."/>
            <person name="Imamura K."/>
            <person name="Itoh M."/>
            <person name="Kato T."/>
            <person name="Kawaji H."/>
            <person name="Kawagashira N."/>
            <person name="Kawashima T."/>
            <person name="Kojima M."/>
            <person name="Kondo S."/>
            <person name="Konno H."/>
            <person name="Nakano K."/>
            <person name="Ninomiya N."/>
            <person name="Nishio T."/>
            <person name="Okada M."/>
            <person name="Plessy C."/>
            <person name="Shibata K."/>
            <person name="Shiraki T."/>
            <person name="Suzuki S."/>
            <person name="Tagami M."/>
            <person name="Waki K."/>
            <person name="Watahiki A."/>
            <person name="Okamura-Oho Y."/>
            <person name="Suzuki H."/>
            <person name="Kawai J."/>
            <person name="Hayashizaki Y."/>
        </authorList>
    </citation>
    <scope>NUCLEOTIDE SEQUENCE [LARGE SCALE MRNA]</scope>
    <source>
        <strain>C57BL/6J</strain>
        <tissue>Testis</tissue>
    </source>
</reference>
<sequence>MAHQNQHQDTIDSTEVEVWDSRTAQEVNKSLYPPAVDSPFTLNTHLSAWRWACTIILGTVLVPVRVSCIVFLLILLWPVAVLSAINLPTQPTKPIRRWRKHLIKSALVFLFRLGFFFAGFLVKVKGKKATREEAPIFVSAPHSTFFDAIAVVVAGLPSVVSDSQLARVPLAGKCILVTQPVLVKREDPNSRKTTRNEILRRVKSKMKWPQILIFPEGLCTNRSCLVTFKLGAFSPGVPVQPVLLRYPNSLDTVTWTWNGFSGFQVCMLTLSQLFTRVEVEFMPVYIPSEEEKKDPILFANTVRIKMANALKLPVTDHSLEDCKLMISAGALQLPMEAGLVEFTKISQKLKLDWDNIHKHLDQYASFAVSSKGGKIGIEAFSRYLKLPISEPLRQLFSLFDRNQDGTIDFREYVIGLTVLCNPSNTEKILQMSFKLFDLDEDGYVTERELTTMLQAAFGVPDLDVSTLFQQMAGKDSDQVSYRTFRRFALKHPAYAKLFHSYIDLQAAYIYSLPREV</sequence>
<protein>
    <recommendedName>
        <fullName>Lysophosphatidylcholine acyltransferase 2B</fullName>
        <ecNumber>2.3.1.-</ecNumber>
    </recommendedName>
    <alternativeName>
        <fullName>Acyltransferase-like 1-B</fullName>
    </alternativeName>
</protein>
<keyword id="KW-0012">Acyltransferase</keyword>
<keyword id="KW-0106">Calcium</keyword>
<keyword id="KW-0325">Glycoprotein</keyword>
<keyword id="KW-0444">Lipid biosynthesis</keyword>
<keyword id="KW-0443">Lipid metabolism</keyword>
<keyword id="KW-0472">Membrane</keyword>
<keyword id="KW-0479">Metal-binding</keyword>
<keyword id="KW-0594">Phospholipid biosynthesis</keyword>
<keyword id="KW-1208">Phospholipid metabolism</keyword>
<keyword id="KW-1185">Reference proteome</keyword>
<keyword id="KW-0677">Repeat</keyword>
<keyword id="KW-0808">Transferase</keyword>
<keyword id="KW-0812">Transmembrane</keyword>
<keyword id="KW-1133">Transmembrane helix</keyword>
<name>PCT2B_MOUSE</name>
<dbReference type="EC" id="2.3.1.-"/>
<dbReference type="EMBL" id="AK014940">
    <property type="protein sequence ID" value="BAB29630.1"/>
    <property type="molecule type" value="mRNA"/>
</dbReference>
<dbReference type="EMBL" id="AK029548">
    <property type="protein sequence ID" value="BAC26509.1"/>
    <property type="molecule type" value="mRNA"/>
</dbReference>
<dbReference type="CCDS" id="CCDS19502.1"/>
<dbReference type="RefSeq" id="NP_081875.1">
    <property type="nucleotide sequence ID" value="NM_027599.3"/>
</dbReference>
<dbReference type="SMR" id="Q9D5U0"/>
<dbReference type="FunCoup" id="Q9D5U0">
    <property type="interactions" value="111"/>
</dbReference>
<dbReference type="STRING" id="10090.ENSMUSP00000127318"/>
<dbReference type="GlyCosmos" id="Q9D5U0">
    <property type="glycosylation" value="1 site, No reported glycans"/>
</dbReference>
<dbReference type="GlyGen" id="Q9D5U0">
    <property type="glycosylation" value="1 site"/>
</dbReference>
<dbReference type="PaxDb" id="10090-ENSMUSP00000127318"/>
<dbReference type="ProteomicsDB" id="294034"/>
<dbReference type="DNASU" id="70902"/>
<dbReference type="Ensembl" id="ENSMUST00000166599.2">
    <property type="protein sequence ID" value="ENSMUSP00000127318.2"/>
    <property type="gene ID" value="ENSMUSG00000033794.7"/>
</dbReference>
<dbReference type="GeneID" id="70902"/>
<dbReference type="KEGG" id="mmu:70902"/>
<dbReference type="UCSC" id="uc008ymf.1">
    <property type="organism name" value="mouse"/>
</dbReference>
<dbReference type="AGR" id="MGI:1918152"/>
<dbReference type="CTD" id="70902"/>
<dbReference type="MGI" id="MGI:1918152">
    <property type="gene designation" value="Lpcat2b"/>
</dbReference>
<dbReference type="VEuPathDB" id="HostDB:ENSMUSG00000033794"/>
<dbReference type="eggNOG" id="KOG4666">
    <property type="taxonomic scope" value="Eukaryota"/>
</dbReference>
<dbReference type="GeneTree" id="ENSGT01030000234574"/>
<dbReference type="HOGENOM" id="CLU_025017_0_0_1"/>
<dbReference type="InParanoid" id="Q9D5U0"/>
<dbReference type="OMA" id="HISAWRW"/>
<dbReference type="OrthoDB" id="272512at2759"/>
<dbReference type="PhylomeDB" id="Q9D5U0"/>
<dbReference type="TreeFam" id="TF323244"/>
<dbReference type="UniPathway" id="UPA00085"/>
<dbReference type="BioGRID-ORCS" id="70902">
    <property type="hits" value="1 hit in 76 CRISPR screens"/>
</dbReference>
<dbReference type="PRO" id="PR:Q9D5U0"/>
<dbReference type="Proteomes" id="UP000000589">
    <property type="component" value="Chromosome 5"/>
</dbReference>
<dbReference type="RNAct" id="Q9D5U0">
    <property type="molecule type" value="protein"/>
</dbReference>
<dbReference type="Bgee" id="ENSMUSG00000033794">
    <property type="expression patterns" value="Expressed in spermatid and 6 other cell types or tissues"/>
</dbReference>
<dbReference type="ExpressionAtlas" id="Q9D5U0">
    <property type="expression patterns" value="baseline and differential"/>
</dbReference>
<dbReference type="GO" id="GO:0016020">
    <property type="term" value="C:membrane"/>
    <property type="evidence" value="ECO:0007669"/>
    <property type="project" value="UniProtKB-SubCell"/>
</dbReference>
<dbReference type="GO" id="GO:0047184">
    <property type="term" value="F:1-acylglycerophosphocholine O-acyltransferase activity"/>
    <property type="evidence" value="ECO:0007669"/>
    <property type="project" value="UniProtKB-ARBA"/>
</dbReference>
<dbReference type="GO" id="GO:0005509">
    <property type="term" value="F:calcium ion binding"/>
    <property type="evidence" value="ECO:0007669"/>
    <property type="project" value="InterPro"/>
</dbReference>
<dbReference type="GO" id="GO:0046486">
    <property type="term" value="P:glycerolipid metabolic process"/>
    <property type="evidence" value="ECO:0007669"/>
    <property type="project" value="UniProtKB-ARBA"/>
</dbReference>
<dbReference type="GO" id="GO:0008654">
    <property type="term" value="P:phospholipid biosynthetic process"/>
    <property type="evidence" value="ECO:0007669"/>
    <property type="project" value="UniProtKB-KW"/>
</dbReference>
<dbReference type="CDD" id="cd00051">
    <property type="entry name" value="EFh"/>
    <property type="match status" value="1"/>
</dbReference>
<dbReference type="CDD" id="cd07991">
    <property type="entry name" value="LPLAT_LPCAT1-like"/>
    <property type="match status" value="1"/>
</dbReference>
<dbReference type="Gene3D" id="1.10.238.10">
    <property type="entry name" value="EF-hand"/>
    <property type="match status" value="1"/>
</dbReference>
<dbReference type="InterPro" id="IPR011992">
    <property type="entry name" value="EF-hand-dom_pair"/>
</dbReference>
<dbReference type="InterPro" id="IPR018247">
    <property type="entry name" value="EF_Hand_1_Ca_BS"/>
</dbReference>
<dbReference type="InterPro" id="IPR002048">
    <property type="entry name" value="EF_hand_dom"/>
</dbReference>
<dbReference type="InterPro" id="IPR045252">
    <property type="entry name" value="LPCAT1-like"/>
</dbReference>
<dbReference type="InterPro" id="IPR002123">
    <property type="entry name" value="Plipid/glycerol_acylTrfase"/>
</dbReference>
<dbReference type="PANTHER" id="PTHR23063:SF13">
    <property type="entry name" value="LYSOPHOSPHATIDYLCHOLINE ACYLTRANSFERASE 2B"/>
    <property type="match status" value="1"/>
</dbReference>
<dbReference type="PANTHER" id="PTHR23063">
    <property type="entry name" value="PHOSPHOLIPID ACYLTRANSFERASE"/>
    <property type="match status" value="1"/>
</dbReference>
<dbReference type="Pfam" id="PF01553">
    <property type="entry name" value="Acyltransferase"/>
    <property type="match status" value="1"/>
</dbReference>
<dbReference type="Pfam" id="PF13202">
    <property type="entry name" value="EF-hand_5"/>
    <property type="match status" value="2"/>
</dbReference>
<dbReference type="PRINTS" id="PR00450">
    <property type="entry name" value="RECOVERIN"/>
</dbReference>
<dbReference type="SMART" id="SM00054">
    <property type="entry name" value="EFh"/>
    <property type="match status" value="2"/>
</dbReference>
<dbReference type="SMART" id="SM00563">
    <property type="entry name" value="PlsC"/>
    <property type="match status" value="1"/>
</dbReference>
<dbReference type="SUPFAM" id="SSF47473">
    <property type="entry name" value="EF-hand"/>
    <property type="match status" value="1"/>
</dbReference>
<dbReference type="SUPFAM" id="SSF69593">
    <property type="entry name" value="Glycerol-3-phosphate (1)-acyltransferase"/>
    <property type="match status" value="1"/>
</dbReference>
<dbReference type="PROSITE" id="PS00018">
    <property type="entry name" value="EF_HAND_1"/>
    <property type="match status" value="2"/>
</dbReference>
<dbReference type="PROSITE" id="PS50222">
    <property type="entry name" value="EF_HAND_2"/>
    <property type="match status" value="2"/>
</dbReference>
<gene>
    <name type="primary">Lpcat2b</name>
    <name type="synonym">Aytl1b</name>
</gene>
<evidence type="ECO:0000250" key="1"/>
<evidence type="ECO:0000255" key="2"/>
<evidence type="ECO:0000255" key="3">
    <source>
        <dbReference type="PROSITE-ProRule" id="PRU00448"/>
    </source>
</evidence>
<evidence type="ECO:0000305" key="4"/>
<feature type="chain" id="PRO_0000247061" description="Lysophosphatidylcholine acyltransferase 2B">
    <location>
        <begin position="1"/>
        <end position="516"/>
    </location>
</feature>
<feature type="transmembrane region" description="Helical" evidence="2">
    <location>
        <begin position="44"/>
        <end position="64"/>
    </location>
</feature>
<feature type="transmembrane region" description="Helical" evidence="2">
    <location>
        <begin position="68"/>
        <end position="88"/>
    </location>
</feature>
<feature type="transmembrane region" description="Helical" evidence="2">
    <location>
        <begin position="102"/>
        <end position="122"/>
    </location>
</feature>
<feature type="domain" description="EF-hand 1" evidence="3">
    <location>
        <begin position="387"/>
        <end position="422"/>
    </location>
</feature>
<feature type="domain" description="EF-hand 2" evidence="3">
    <location>
        <begin position="424"/>
        <end position="459"/>
    </location>
</feature>
<feature type="short sequence motif" description="HXXXXD motif">
    <location>
        <begin position="142"/>
        <end position="147"/>
    </location>
</feature>
<feature type="binding site" evidence="3">
    <location>
        <position position="400"/>
    </location>
    <ligand>
        <name>Ca(2+)</name>
        <dbReference type="ChEBI" id="CHEBI:29108"/>
        <label>1</label>
    </ligand>
</feature>
<feature type="binding site" evidence="3">
    <location>
        <position position="402"/>
    </location>
    <ligand>
        <name>Ca(2+)</name>
        <dbReference type="ChEBI" id="CHEBI:29108"/>
        <label>1</label>
    </ligand>
</feature>
<feature type="binding site" evidence="3">
    <location>
        <position position="404"/>
    </location>
    <ligand>
        <name>Ca(2+)</name>
        <dbReference type="ChEBI" id="CHEBI:29108"/>
        <label>1</label>
    </ligand>
</feature>
<feature type="binding site" evidence="3">
    <location>
        <position position="406"/>
    </location>
    <ligand>
        <name>Ca(2+)</name>
        <dbReference type="ChEBI" id="CHEBI:29108"/>
        <label>1</label>
    </ligand>
</feature>
<feature type="binding site" evidence="3">
    <location>
        <position position="411"/>
    </location>
    <ligand>
        <name>Ca(2+)</name>
        <dbReference type="ChEBI" id="CHEBI:29108"/>
        <label>1</label>
    </ligand>
</feature>
<feature type="binding site" evidence="3">
    <location>
        <position position="437"/>
    </location>
    <ligand>
        <name>Ca(2+)</name>
        <dbReference type="ChEBI" id="CHEBI:29108"/>
        <label>2</label>
    </ligand>
</feature>
<feature type="binding site" evidence="3">
    <location>
        <position position="439"/>
    </location>
    <ligand>
        <name>Ca(2+)</name>
        <dbReference type="ChEBI" id="CHEBI:29108"/>
        <label>2</label>
    </ligand>
</feature>
<feature type="binding site" evidence="3">
    <location>
        <position position="441"/>
    </location>
    <ligand>
        <name>Ca(2+)</name>
        <dbReference type="ChEBI" id="CHEBI:29108"/>
        <label>2</label>
    </ligand>
</feature>
<feature type="binding site" evidence="3">
    <location>
        <position position="443"/>
    </location>
    <ligand>
        <name>Ca(2+)</name>
        <dbReference type="ChEBI" id="CHEBI:29108"/>
        <label>2</label>
    </ligand>
</feature>
<feature type="binding site" evidence="3">
    <location>
        <position position="448"/>
    </location>
    <ligand>
        <name>Ca(2+)</name>
        <dbReference type="ChEBI" id="CHEBI:29108"/>
        <label>2</label>
    </ligand>
</feature>
<feature type="glycosylation site" description="N-linked (GlcNAc...) asparagine" evidence="2">
    <location>
        <position position="28"/>
    </location>
</feature>